<protein>
    <recommendedName>
        <fullName evidence="1">Protease HtpX homolog</fullName>
        <ecNumber evidence="1">3.4.24.-</ecNumber>
    </recommendedName>
</protein>
<name>HTPX_RHILW</name>
<accession>B5ZV34</accession>
<comment type="cofactor">
    <cofactor evidence="1">
        <name>Zn(2+)</name>
        <dbReference type="ChEBI" id="CHEBI:29105"/>
    </cofactor>
    <text evidence="1">Binds 1 zinc ion per subunit.</text>
</comment>
<comment type="subcellular location">
    <subcellularLocation>
        <location evidence="1">Cell inner membrane</location>
        <topology evidence="1">Multi-pass membrane protein</topology>
    </subcellularLocation>
</comment>
<comment type="similarity">
    <text evidence="1">Belongs to the peptidase M48B family.</text>
</comment>
<feature type="chain" id="PRO_1000098837" description="Protease HtpX homolog">
    <location>
        <begin position="1"/>
        <end position="320"/>
    </location>
</feature>
<feature type="transmembrane region" description="Helical" evidence="1">
    <location>
        <begin position="6"/>
        <end position="26"/>
    </location>
</feature>
<feature type="transmembrane region" description="Helical" evidence="1">
    <location>
        <begin position="28"/>
        <end position="48"/>
    </location>
</feature>
<feature type="transmembrane region" description="Helical" evidence="1">
    <location>
        <begin position="145"/>
        <end position="165"/>
    </location>
</feature>
<feature type="transmembrane region" description="Helical" evidence="1">
    <location>
        <begin position="173"/>
        <end position="193"/>
    </location>
</feature>
<feature type="region of interest" description="Disordered" evidence="2">
    <location>
        <begin position="281"/>
        <end position="320"/>
    </location>
</feature>
<feature type="active site" evidence="1">
    <location>
        <position position="131"/>
    </location>
</feature>
<feature type="binding site" evidence="1">
    <location>
        <position position="130"/>
    </location>
    <ligand>
        <name>Zn(2+)</name>
        <dbReference type="ChEBI" id="CHEBI:29105"/>
        <note>catalytic</note>
    </ligand>
</feature>
<feature type="binding site" evidence="1">
    <location>
        <position position="134"/>
    </location>
    <ligand>
        <name>Zn(2+)</name>
        <dbReference type="ChEBI" id="CHEBI:29105"/>
        <note>catalytic</note>
    </ligand>
</feature>
<feature type="binding site" evidence="1">
    <location>
        <position position="202"/>
    </location>
    <ligand>
        <name>Zn(2+)</name>
        <dbReference type="ChEBI" id="CHEBI:29105"/>
        <note>catalytic</note>
    </ligand>
</feature>
<gene>
    <name evidence="1" type="primary">htpX</name>
    <name type="ordered locus">Rleg2_3918</name>
</gene>
<sequence>MNLVRTAMLLAFMTALFMFVGFLIGGRAGMMIAFVIAAGMNFFSYWNSDRMVLSAYRAQQVDERNAPEFFAIVRDLARNAGLPMPKVYLYDSPQPNAFATGRNPENAAVAASTGLLQALSPEEVAGVMAHELAHIQNRDTLTMTITATLAGAISMLGNFAFFFGGNRENNNNPLGFVGVLVAMIVAPLAAMLVQMAISRTREYSADRRGAEICGNPLWLASALGKIARGAAHVPNEDAERNPATAHMFIINPLSGERMDNLFSTHPNTENRIAALQDMAQGGMNVSTPPVRAANPSRKSRSVPDTGLGRGGSQPPKGPWS</sequence>
<reference key="1">
    <citation type="journal article" date="2010" name="Stand. Genomic Sci.">
        <title>Complete genome sequence of Rhizobium leguminosarum bv trifolii strain WSM2304, an effective microsymbiont of the South American clover Trifolium polymorphum.</title>
        <authorList>
            <person name="Reeve W."/>
            <person name="O'Hara G."/>
            <person name="Chain P."/>
            <person name="Ardley J."/>
            <person name="Brau L."/>
            <person name="Nandesena K."/>
            <person name="Tiwari R."/>
            <person name="Malfatti S."/>
            <person name="Kiss H."/>
            <person name="Lapidus A."/>
            <person name="Copeland A."/>
            <person name="Nolan M."/>
            <person name="Land M."/>
            <person name="Ivanova N."/>
            <person name="Mavromatis K."/>
            <person name="Markowitz V."/>
            <person name="Kyrpides N."/>
            <person name="Melino V."/>
            <person name="Denton M."/>
            <person name="Yates R."/>
            <person name="Howieson J."/>
        </authorList>
    </citation>
    <scope>NUCLEOTIDE SEQUENCE [LARGE SCALE GENOMIC DNA]</scope>
    <source>
        <strain>WSM2304</strain>
    </source>
</reference>
<organism>
    <name type="scientific">Rhizobium leguminosarum bv. trifolii (strain WSM2304)</name>
    <dbReference type="NCBI Taxonomy" id="395492"/>
    <lineage>
        <taxon>Bacteria</taxon>
        <taxon>Pseudomonadati</taxon>
        <taxon>Pseudomonadota</taxon>
        <taxon>Alphaproteobacteria</taxon>
        <taxon>Hyphomicrobiales</taxon>
        <taxon>Rhizobiaceae</taxon>
        <taxon>Rhizobium/Agrobacterium group</taxon>
        <taxon>Rhizobium</taxon>
    </lineage>
</organism>
<proteinExistence type="inferred from homology"/>
<dbReference type="EC" id="3.4.24.-" evidence="1"/>
<dbReference type="EMBL" id="CP001191">
    <property type="protein sequence ID" value="ACI57180.1"/>
    <property type="molecule type" value="Genomic_DNA"/>
</dbReference>
<dbReference type="RefSeq" id="WP_012559379.1">
    <property type="nucleotide sequence ID" value="NC_011369.1"/>
</dbReference>
<dbReference type="STRING" id="395492.Rleg2_3918"/>
<dbReference type="KEGG" id="rlt:Rleg2_3918"/>
<dbReference type="eggNOG" id="COG0501">
    <property type="taxonomic scope" value="Bacteria"/>
</dbReference>
<dbReference type="HOGENOM" id="CLU_042266_3_0_5"/>
<dbReference type="Proteomes" id="UP000008330">
    <property type="component" value="Chromosome"/>
</dbReference>
<dbReference type="GO" id="GO:0005886">
    <property type="term" value="C:plasma membrane"/>
    <property type="evidence" value="ECO:0007669"/>
    <property type="project" value="UniProtKB-SubCell"/>
</dbReference>
<dbReference type="GO" id="GO:0004222">
    <property type="term" value="F:metalloendopeptidase activity"/>
    <property type="evidence" value="ECO:0007669"/>
    <property type="project" value="UniProtKB-UniRule"/>
</dbReference>
<dbReference type="GO" id="GO:0008270">
    <property type="term" value="F:zinc ion binding"/>
    <property type="evidence" value="ECO:0007669"/>
    <property type="project" value="UniProtKB-UniRule"/>
</dbReference>
<dbReference type="GO" id="GO:0006508">
    <property type="term" value="P:proteolysis"/>
    <property type="evidence" value="ECO:0007669"/>
    <property type="project" value="UniProtKB-KW"/>
</dbReference>
<dbReference type="CDD" id="cd07336">
    <property type="entry name" value="M48B_HtpX_like"/>
    <property type="match status" value="1"/>
</dbReference>
<dbReference type="Gene3D" id="3.30.2010.10">
    <property type="entry name" value="Metalloproteases ('zincins'), catalytic domain"/>
    <property type="match status" value="1"/>
</dbReference>
<dbReference type="HAMAP" id="MF_00188">
    <property type="entry name" value="Pept_M48_protease_HtpX"/>
    <property type="match status" value="1"/>
</dbReference>
<dbReference type="InterPro" id="IPR050083">
    <property type="entry name" value="HtpX_protease"/>
</dbReference>
<dbReference type="InterPro" id="IPR022919">
    <property type="entry name" value="Pept_M48_protease_HtpX"/>
</dbReference>
<dbReference type="InterPro" id="IPR001915">
    <property type="entry name" value="Peptidase_M48"/>
</dbReference>
<dbReference type="NCBIfam" id="NF002363">
    <property type="entry name" value="PRK01345.1"/>
    <property type="match status" value="1"/>
</dbReference>
<dbReference type="NCBIfam" id="NF002826">
    <property type="entry name" value="PRK03001.1"/>
    <property type="match status" value="1"/>
</dbReference>
<dbReference type="PANTHER" id="PTHR43221">
    <property type="entry name" value="PROTEASE HTPX"/>
    <property type="match status" value="1"/>
</dbReference>
<dbReference type="PANTHER" id="PTHR43221:SF1">
    <property type="entry name" value="PROTEASE HTPX"/>
    <property type="match status" value="1"/>
</dbReference>
<dbReference type="Pfam" id="PF01435">
    <property type="entry name" value="Peptidase_M48"/>
    <property type="match status" value="1"/>
</dbReference>
<dbReference type="PROSITE" id="PS00142">
    <property type="entry name" value="ZINC_PROTEASE"/>
    <property type="match status" value="1"/>
</dbReference>
<evidence type="ECO:0000255" key="1">
    <source>
        <dbReference type="HAMAP-Rule" id="MF_00188"/>
    </source>
</evidence>
<evidence type="ECO:0000256" key="2">
    <source>
        <dbReference type="SAM" id="MobiDB-lite"/>
    </source>
</evidence>
<keyword id="KW-0997">Cell inner membrane</keyword>
<keyword id="KW-1003">Cell membrane</keyword>
<keyword id="KW-0378">Hydrolase</keyword>
<keyword id="KW-0472">Membrane</keyword>
<keyword id="KW-0479">Metal-binding</keyword>
<keyword id="KW-0482">Metalloprotease</keyword>
<keyword id="KW-0645">Protease</keyword>
<keyword id="KW-1185">Reference proteome</keyword>
<keyword id="KW-0812">Transmembrane</keyword>
<keyword id="KW-1133">Transmembrane helix</keyword>
<keyword id="KW-0862">Zinc</keyword>